<proteinExistence type="inferred from homology"/>
<organism>
    <name type="scientific">Bacillus pumilus (strain SAFR-032)</name>
    <dbReference type="NCBI Taxonomy" id="315750"/>
    <lineage>
        <taxon>Bacteria</taxon>
        <taxon>Bacillati</taxon>
        <taxon>Bacillota</taxon>
        <taxon>Bacilli</taxon>
        <taxon>Bacillales</taxon>
        <taxon>Bacillaceae</taxon>
        <taxon>Bacillus</taxon>
    </lineage>
</organism>
<protein>
    <recommendedName>
        <fullName evidence="1">UPF0297 protein BPUM_2379</fullName>
    </recommendedName>
</protein>
<evidence type="ECO:0000255" key="1">
    <source>
        <dbReference type="HAMAP-Rule" id="MF_01507"/>
    </source>
</evidence>
<feature type="chain" id="PRO_0000315246" description="UPF0297 protein BPUM_2379">
    <location>
        <begin position="1"/>
        <end position="88"/>
    </location>
</feature>
<name>Y2379_BACP2</name>
<sequence length="88" mass="10180">MSSFDKTMKFNFSDDSAETNVNEVLITVYDALQEKGYNPINQIVGYLLSGDPAYIPRHQDARNLIRKLERDELIEELVKSYLETHKEA</sequence>
<dbReference type="EMBL" id="CP000813">
    <property type="protein sequence ID" value="ABV63045.2"/>
    <property type="molecule type" value="Genomic_DNA"/>
</dbReference>
<dbReference type="RefSeq" id="WP_024718370.1">
    <property type="nucleotide sequence ID" value="NZ_VEIS01000010.1"/>
</dbReference>
<dbReference type="SMR" id="A8FFM8"/>
<dbReference type="STRING" id="315750.BPUM_2379"/>
<dbReference type="KEGG" id="bpu:BPUM_2379"/>
<dbReference type="eggNOG" id="COG4472">
    <property type="taxonomic scope" value="Bacteria"/>
</dbReference>
<dbReference type="HOGENOM" id="CLU_162466_0_0_9"/>
<dbReference type="OrthoDB" id="9796303at2"/>
<dbReference type="Proteomes" id="UP000001355">
    <property type="component" value="Chromosome"/>
</dbReference>
<dbReference type="HAMAP" id="MF_01507">
    <property type="entry name" value="UPF0297"/>
    <property type="match status" value="1"/>
</dbReference>
<dbReference type="InterPro" id="IPR009309">
    <property type="entry name" value="IreB"/>
</dbReference>
<dbReference type="NCBIfam" id="NF003997">
    <property type="entry name" value="PRK05473.1"/>
    <property type="match status" value="1"/>
</dbReference>
<dbReference type="PANTHER" id="PTHR40067">
    <property type="entry name" value="UPF0297 PROTEIN YRZL"/>
    <property type="match status" value="1"/>
</dbReference>
<dbReference type="PANTHER" id="PTHR40067:SF1">
    <property type="entry name" value="UPF0297 PROTEIN YRZL"/>
    <property type="match status" value="1"/>
</dbReference>
<dbReference type="Pfam" id="PF06135">
    <property type="entry name" value="IreB"/>
    <property type="match status" value="1"/>
</dbReference>
<dbReference type="PIRSF" id="PIRSF037258">
    <property type="entry name" value="DUF965_bac"/>
    <property type="match status" value="1"/>
</dbReference>
<comment type="similarity">
    <text evidence="1">Belongs to the UPF0297 family.</text>
</comment>
<accession>A8FFM8</accession>
<gene>
    <name type="ordered locus">BPUM_2379</name>
</gene>
<reference key="1">
    <citation type="journal article" date="2007" name="PLoS ONE">
        <title>Paradoxical DNA repair and peroxide resistance gene conservation in Bacillus pumilus SAFR-032.</title>
        <authorList>
            <person name="Gioia J."/>
            <person name="Yerrapragada S."/>
            <person name="Qin X."/>
            <person name="Jiang H."/>
            <person name="Igboeli O.C."/>
            <person name="Muzny D."/>
            <person name="Dugan-Rocha S."/>
            <person name="Ding Y."/>
            <person name="Hawes A."/>
            <person name="Liu W."/>
            <person name="Perez L."/>
            <person name="Kovar C."/>
            <person name="Dinh H."/>
            <person name="Lee S."/>
            <person name="Nazareth L."/>
            <person name="Blyth P."/>
            <person name="Holder M."/>
            <person name="Buhay C."/>
            <person name="Tirumalai M.R."/>
            <person name="Liu Y."/>
            <person name="Dasgupta I."/>
            <person name="Bokhetache L."/>
            <person name="Fujita M."/>
            <person name="Karouia F."/>
            <person name="Eswara Moorthy P."/>
            <person name="Siefert J."/>
            <person name="Uzman A."/>
            <person name="Buzumbo P."/>
            <person name="Verma A."/>
            <person name="Zwiya H."/>
            <person name="McWilliams B.D."/>
            <person name="Olowu A."/>
            <person name="Clinkenbeard K.D."/>
            <person name="Newcombe D."/>
            <person name="Golebiewski L."/>
            <person name="Petrosino J.F."/>
            <person name="Nicholson W.L."/>
            <person name="Fox G.E."/>
            <person name="Venkateswaran K."/>
            <person name="Highlander S.K."/>
            <person name="Weinstock G.M."/>
        </authorList>
    </citation>
    <scope>NUCLEOTIDE SEQUENCE [LARGE SCALE GENOMIC DNA]</scope>
    <source>
        <strain>SAFR-032</strain>
    </source>
</reference>
<reference key="2">
    <citation type="journal article" date="2016" name="PLoS ONE">
        <title>Bacillus pumilus SAFR-032 Genome Revisited: Sequence Update and Re-Annotation.</title>
        <authorList>
            <person name="Stepanov V.G."/>
            <person name="Tirumalai M.R."/>
            <person name="Montazari S."/>
            <person name="Checinska A."/>
            <person name="Venkateswaran K."/>
            <person name="Fox G.E."/>
        </authorList>
    </citation>
    <scope>SEQUENCE REVISION TO N-TERMINUS</scope>
    <source>
        <strain>SAFR-032</strain>
    </source>
</reference>